<feature type="signal peptide" description="Tat-type signal" evidence="2">
    <location>
        <begin position="1"/>
        <end position="29"/>
    </location>
</feature>
<feature type="chain" id="PRO_5000342140" description="Glycosyl hydrolase family 109 protein">
    <location>
        <begin position="30"/>
        <end position="454"/>
    </location>
</feature>
<feature type="binding site" evidence="1">
    <location>
        <begin position="43"/>
        <end position="44"/>
    </location>
    <ligand>
        <name>NAD(+)</name>
        <dbReference type="ChEBI" id="CHEBI:57540"/>
    </ligand>
</feature>
<feature type="binding site" evidence="1">
    <location>
        <position position="65"/>
    </location>
    <ligand>
        <name>NAD(+)</name>
        <dbReference type="ChEBI" id="CHEBI:57540"/>
    </ligand>
</feature>
<feature type="binding site" evidence="1">
    <location>
        <begin position="116"/>
        <end position="119"/>
    </location>
    <ligand>
        <name>NAD(+)</name>
        <dbReference type="ChEBI" id="CHEBI:57540"/>
    </ligand>
</feature>
<feature type="binding site" evidence="1">
    <location>
        <begin position="136"/>
        <end position="137"/>
    </location>
    <ligand>
        <name>NAD(+)</name>
        <dbReference type="ChEBI" id="CHEBI:57540"/>
    </ligand>
</feature>
<feature type="binding site" evidence="1">
    <location>
        <position position="165"/>
    </location>
    <ligand>
        <name>NAD(+)</name>
        <dbReference type="ChEBI" id="CHEBI:57540"/>
    </ligand>
</feature>
<feature type="binding site" evidence="1">
    <location>
        <position position="194"/>
    </location>
    <ligand>
        <name>substrate</name>
    </ligand>
</feature>
<feature type="binding site" evidence="1">
    <location>
        <begin position="224"/>
        <end position="228"/>
    </location>
    <ligand>
        <name>NAD(+)</name>
        <dbReference type="ChEBI" id="CHEBI:57540"/>
    </ligand>
</feature>
<feature type="binding site" evidence="1">
    <location>
        <position position="229"/>
    </location>
    <ligand>
        <name>substrate</name>
    </ligand>
</feature>
<feature type="binding site" evidence="1">
    <location>
        <begin position="241"/>
        <end position="244"/>
    </location>
    <ligand>
        <name>substrate</name>
    </ligand>
</feature>
<feature type="binding site" evidence="1">
    <location>
        <position position="241"/>
    </location>
    <ligand>
        <name>NAD(+)</name>
        <dbReference type="ChEBI" id="CHEBI:57540"/>
    </ligand>
</feature>
<feature type="binding site" evidence="1">
    <location>
        <position position="324"/>
    </location>
    <ligand>
        <name>substrate</name>
    </ligand>
</feature>
<comment type="function">
    <text evidence="1">Glycosidase.</text>
</comment>
<comment type="cofactor">
    <cofactor evidence="1">
        <name>NAD(+)</name>
        <dbReference type="ChEBI" id="CHEBI:57540"/>
    </cofactor>
    <text evidence="1">Binds 1 NAD(+) per subunit. The NAD(+) cannot dissociate.</text>
</comment>
<comment type="PTM">
    <text>Predicted to be exported by the Tat system. The position of the signal peptide cleavage has not been experimentally proven.</text>
</comment>
<comment type="similarity">
    <text evidence="3">Belongs to the Gfo/Idh/MocA family. Glycosyl hydrolase 109 subfamily.</text>
</comment>
<protein>
    <recommendedName>
        <fullName>Glycosyl hydrolase family 109 protein</fullName>
        <ecNumber>3.2.1.-</ecNumber>
    </recommendedName>
</protein>
<proteinExistence type="inferred from homology"/>
<name>GH109_STRMK</name>
<organism>
    <name type="scientific">Stenotrophomonas maltophilia (strain K279a)</name>
    <dbReference type="NCBI Taxonomy" id="522373"/>
    <lineage>
        <taxon>Bacteria</taxon>
        <taxon>Pseudomonadati</taxon>
        <taxon>Pseudomonadota</taxon>
        <taxon>Gammaproteobacteria</taxon>
        <taxon>Lysobacterales</taxon>
        <taxon>Lysobacteraceae</taxon>
        <taxon>Stenotrophomonas</taxon>
        <taxon>Stenotrophomonas maltophilia group</taxon>
    </lineage>
</organism>
<accession>B2FLK4</accession>
<dbReference type="EC" id="3.2.1.-"/>
<dbReference type="EMBL" id="AM743169">
    <property type="protein sequence ID" value="CAQ47799.1"/>
    <property type="molecule type" value="Genomic_DNA"/>
</dbReference>
<dbReference type="SMR" id="B2FLK4"/>
<dbReference type="CAZy" id="GH109">
    <property type="family name" value="Glycoside Hydrolase Family 109"/>
</dbReference>
<dbReference type="EnsemblBacteria" id="CAQ47799">
    <property type="protein sequence ID" value="CAQ47799"/>
    <property type="gene ID" value="Smlt4431"/>
</dbReference>
<dbReference type="KEGG" id="sml:Smlt4431"/>
<dbReference type="eggNOG" id="COG0673">
    <property type="taxonomic scope" value="Bacteria"/>
</dbReference>
<dbReference type="HOGENOM" id="CLU_046965_0_0_6"/>
<dbReference type="Proteomes" id="UP000008840">
    <property type="component" value="Chromosome"/>
</dbReference>
<dbReference type="GO" id="GO:0016798">
    <property type="term" value="F:hydrolase activity, acting on glycosyl bonds"/>
    <property type="evidence" value="ECO:0007669"/>
    <property type="project" value="UniProtKB-KW"/>
</dbReference>
<dbReference type="GO" id="GO:0000166">
    <property type="term" value="F:nucleotide binding"/>
    <property type="evidence" value="ECO:0007669"/>
    <property type="project" value="InterPro"/>
</dbReference>
<dbReference type="Gene3D" id="3.30.360.10">
    <property type="entry name" value="Dihydrodipicolinate Reductase, domain 2"/>
    <property type="match status" value="1"/>
</dbReference>
<dbReference type="Gene3D" id="3.40.50.720">
    <property type="entry name" value="NAD(P)-binding Rossmann-like Domain"/>
    <property type="match status" value="1"/>
</dbReference>
<dbReference type="InterPro" id="IPR000683">
    <property type="entry name" value="Gfo/Idh/MocA-like_OxRdtase_N"/>
</dbReference>
<dbReference type="InterPro" id="IPR050463">
    <property type="entry name" value="Gfo/Idh/MocA_oxidrdct_glycsds"/>
</dbReference>
<dbReference type="InterPro" id="IPR049303">
    <property type="entry name" value="Glyco_hydro_109_C"/>
</dbReference>
<dbReference type="InterPro" id="IPR036291">
    <property type="entry name" value="NAD(P)-bd_dom_sf"/>
</dbReference>
<dbReference type="InterPro" id="IPR006311">
    <property type="entry name" value="TAT_signal"/>
</dbReference>
<dbReference type="PANTHER" id="PTHR43818">
    <property type="entry name" value="BCDNA.GH03377"/>
    <property type="match status" value="1"/>
</dbReference>
<dbReference type="PANTHER" id="PTHR43818:SF1">
    <property type="entry name" value="GLYCOSYL HYDROLASE FAMILY 109 PROTEIN"/>
    <property type="match status" value="1"/>
</dbReference>
<dbReference type="Pfam" id="PF01408">
    <property type="entry name" value="GFO_IDH_MocA"/>
    <property type="match status" value="1"/>
</dbReference>
<dbReference type="Pfam" id="PF21252">
    <property type="entry name" value="Glyco_hydro_109_C"/>
    <property type="match status" value="1"/>
</dbReference>
<dbReference type="SUPFAM" id="SSF55347">
    <property type="entry name" value="Glyceraldehyde-3-phosphate dehydrogenase-like, C-terminal domain"/>
    <property type="match status" value="1"/>
</dbReference>
<dbReference type="SUPFAM" id="SSF51735">
    <property type="entry name" value="NAD(P)-binding Rossmann-fold domains"/>
    <property type="match status" value="1"/>
</dbReference>
<dbReference type="PROSITE" id="PS51318">
    <property type="entry name" value="TAT"/>
    <property type="match status" value="1"/>
</dbReference>
<gene>
    <name type="ordered locus">Smlt4431</name>
</gene>
<evidence type="ECO:0000250" key="1"/>
<evidence type="ECO:0000255" key="2">
    <source>
        <dbReference type="PROSITE-ProRule" id="PRU00648"/>
    </source>
</evidence>
<evidence type="ECO:0000305" key="3"/>
<sequence>MFAMKRREFIAASAAVAASSLLPQTPAWARGRKVRLAMIGTGMRGLVLLKELVRRDDVEVVALCDIEPIMLGRAMDMVAKAGKPAPKTYGQDRDTHAWKRLLEQKGIDGVIIATPWEYHAPMAIAAMQAGVAVGCEVVAGITLQDHWDVLKTQLSTGTPYMLLENVCYRRDVMAALQMVRQGLFGELVHLQAGYQHDLRGVKFNSGDPNQPYDSGVEFGPKGWSEARWRTEHSVERNGELYPSHGIGPCAMYTGINRGNRFTHINAFATKARGLHEYTVAKSGGTTHPSTKVKFKLGDIVTTTLACENGETILLQHDTSLPRPYSMGFRVQGTKGLWMDVNHSIHIEGRSPPHQWEEFKKYQDEYEHPLWKQNADTAASAGHGGMDWFVIHAFVEALKAKAPMPIDIYDAVTWSAITPLSEQSIANSFQTLEFPDFTAGAWKQRKPIFAFDGKY</sequence>
<keyword id="KW-0326">Glycosidase</keyword>
<keyword id="KW-0378">Hydrolase</keyword>
<keyword id="KW-0520">NAD</keyword>
<keyword id="KW-1185">Reference proteome</keyword>
<keyword id="KW-0732">Signal</keyword>
<reference key="1">
    <citation type="journal article" date="2008" name="Genome Biol.">
        <title>The complete genome, comparative and functional analysis of Stenotrophomonas maltophilia reveals an organism heavily shielded by drug resistance determinants.</title>
        <authorList>
            <person name="Crossman L.C."/>
            <person name="Gould V.C."/>
            <person name="Dow J.M."/>
            <person name="Vernikos G.S."/>
            <person name="Okazaki A."/>
            <person name="Sebaihia M."/>
            <person name="Saunders D."/>
            <person name="Arrowsmith C."/>
            <person name="Carver T."/>
            <person name="Peters N."/>
            <person name="Adlem E."/>
            <person name="Kerhornou A."/>
            <person name="Lord A."/>
            <person name="Murphy L."/>
            <person name="Seeger K."/>
            <person name="Squares R."/>
            <person name="Rutter S."/>
            <person name="Quail M.A."/>
            <person name="Rajandream M.A."/>
            <person name="Harris D."/>
            <person name="Churcher C."/>
            <person name="Bentley S.D."/>
            <person name="Parkhill J."/>
            <person name="Thomson N.R."/>
            <person name="Avison M.B."/>
        </authorList>
    </citation>
    <scope>NUCLEOTIDE SEQUENCE [LARGE SCALE GENOMIC DNA]</scope>
    <source>
        <strain>K279a</strain>
    </source>
</reference>